<sequence>MNPNCARCGKIVYPTEKVNCLDKFWHKACFHCETCKMTLNMKNYKGYEKKPYCNAHYPKQSFTMVADTPENLRLKQQSELQSQVRYKEEFEKNKGKGFSVVADTPELQRIKKTQDQISNIKYHEEFEKSRMGPSGGEGMEPERRDSQDGSSYRRPLEQQQPHHIPTSAPVYQQPQQQPVAQSYGGYKEPAAPVSIQRSAPGGGGKRYRAVYDYSAADEDEVSFQDGDTIVNVQQIDDGWMYGTVERTGDTGMLPANYVEAI</sequence>
<keyword id="KW-0002">3D-structure</keyword>
<keyword id="KW-0007">Acetylation</keyword>
<keyword id="KW-0009">Actin-binding</keyword>
<keyword id="KW-0025">Alternative splicing</keyword>
<keyword id="KW-0963">Cytoplasm</keyword>
<keyword id="KW-0206">Cytoskeleton</keyword>
<keyword id="KW-0903">Direct protein sequencing</keyword>
<keyword id="KW-0406">Ion transport</keyword>
<keyword id="KW-0440">LIM domain</keyword>
<keyword id="KW-0479">Metal-binding</keyword>
<keyword id="KW-0488">Methylation</keyword>
<keyword id="KW-0597">Phosphoprotein</keyword>
<keyword id="KW-1267">Proteomics identification</keyword>
<keyword id="KW-1185">Reference proteome</keyword>
<keyword id="KW-0677">Repeat</keyword>
<keyword id="KW-0728">SH3 domain</keyword>
<keyword id="KW-0813">Transport</keyword>
<keyword id="KW-0862">Zinc</keyword>
<dbReference type="EMBL" id="X82456">
    <property type="protein sequence ID" value="CAA57833.1"/>
    <property type="molecule type" value="mRNA"/>
</dbReference>
<dbReference type="EMBL" id="AK294704">
    <property type="protein sequence ID" value="BAG57861.1"/>
    <property type="molecule type" value="mRNA"/>
</dbReference>
<dbReference type="EMBL" id="AC006441">
    <property type="status" value="NOT_ANNOTATED_CDS"/>
    <property type="molecule type" value="Genomic_DNA"/>
</dbReference>
<dbReference type="EMBL" id="AC110749">
    <property type="status" value="NOT_ANNOTATED_CDS"/>
    <property type="molecule type" value="Genomic_DNA"/>
</dbReference>
<dbReference type="EMBL" id="BC007560">
    <property type="protein sequence ID" value="AAH07560.1"/>
    <property type="molecule type" value="mRNA"/>
</dbReference>
<dbReference type="EMBL" id="BC012460">
    <property type="protein sequence ID" value="AAH12460.1"/>
    <property type="molecule type" value="mRNA"/>
</dbReference>
<dbReference type="CCDS" id="CCDS11331.1">
    <molecule id="Q14847-1"/>
</dbReference>
<dbReference type="CCDS" id="CCDS62164.1">
    <molecule id="Q14847-3"/>
</dbReference>
<dbReference type="PIR" id="S68234">
    <property type="entry name" value="S68234"/>
</dbReference>
<dbReference type="RefSeq" id="NP_001258537.1">
    <molecule id="Q14847-3"/>
    <property type="nucleotide sequence ID" value="NM_001271608.2"/>
</dbReference>
<dbReference type="RefSeq" id="NP_006139.1">
    <molecule id="Q14847-1"/>
    <property type="nucleotide sequence ID" value="NM_006148.4"/>
</dbReference>
<dbReference type="PDB" id="3I35">
    <property type="method" value="X-ray"/>
    <property type="resolution" value="1.40 A"/>
    <property type="chains" value="A=202-261"/>
</dbReference>
<dbReference type="PDBsum" id="3I35"/>
<dbReference type="SMR" id="Q14847"/>
<dbReference type="BioGRID" id="110120">
    <property type="interactions" value="251"/>
</dbReference>
<dbReference type="FunCoup" id="Q14847">
    <property type="interactions" value="407"/>
</dbReference>
<dbReference type="IntAct" id="Q14847">
    <property type="interactions" value="184"/>
</dbReference>
<dbReference type="MINT" id="Q14847"/>
<dbReference type="STRING" id="9606.ENSP00000325240"/>
<dbReference type="GlyCosmos" id="Q14847">
    <property type="glycosylation" value="4 sites, 2 glycans"/>
</dbReference>
<dbReference type="GlyGen" id="Q14847">
    <property type="glycosylation" value="5 sites, 2 O-linked glycans (5 sites)"/>
</dbReference>
<dbReference type="iPTMnet" id="Q14847"/>
<dbReference type="MetOSite" id="Q14847"/>
<dbReference type="PhosphoSitePlus" id="Q14847"/>
<dbReference type="SwissPalm" id="Q14847"/>
<dbReference type="BioMuta" id="LASP1"/>
<dbReference type="DMDM" id="3122342"/>
<dbReference type="OGP" id="Q14847"/>
<dbReference type="CPTAC" id="CPTAC-86"/>
<dbReference type="CPTAC" id="CPTAC-87"/>
<dbReference type="CPTAC" id="CPTAC-928"/>
<dbReference type="jPOST" id="Q14847"/>
<dbReference type="MassIVE" id="Q14847"/>
<dbReference type="PaxDb" id="9606-ENSP00000325240"/>
<dbReference type="PeptideAtlas" id="Q14847"/>
<dbReference type="ProteomicsDB" id="4149"/>
<dbReference type="ProteomicsDB" id="60206">
    <molecule id="Q14847-1"/>
</dbReference>
<dbReference type="ProteomicsDB" id="60207">
    <molecule id="Q14847-2"/>
</dbReference>
<dbReference type="Pumba" id="Q14847"/>
<dbReference type="ABCD" id="Q14847">
    <property type="antibodies" value="6 sequenced antibodies"/>
</dbReference>
<dbReference type="Antibodypedia" id="1894">
    <property type="antibodies" value="399 antibodies from 37 providers"/>
</dbReference>
<dbReference type="DNASU" id="3927"/>
<dbReference type="Ensembl" id="ENST00000318008.11">
    <molecule id="Q14847-1"/>
    <property type="protein sequence ID" value="ENSP00000325240.6"/>
    <property type="gene ID" value="ENSG00000002834.19"/>
</dbReference>
<dbReference type="Ensembl" id="ENST00000433206.6">
    <molecule id="Q14847-3"/>
    <property type="protein sequence ID" value="ENSP00000401048.2"/>
    <property type="gene ID" value="ENSG00000002834.19"/>
</dbReference>
<dbReference type="GeneID" id="3927"/>
<dbReference type="KEGG" id="hsa:3927"/>
<dbReference type="MANE-Select" id="ENST00000318008.11">
    <property type="protein sequence ID" value="ENSP00000325240.6"/>
    <property type="RefSeq nucleotide sequence ID" value="NM_006148.4"/>
    <property type="RefSeq protein sequence ID" value="NP_006139.1"/>
</dbReference>
<dbReference type="UCSC" id="uc002hra.3">
    <molecule id="Q14847-1"/>
    <property type="organism name" value="human"/>
</dbReference>
<dbReference type="AGR" id="HGNC:6513"/>
<dbReference type="CTD" id="3927"/>
<dbReference type="DisGeNET" id="3927"/>
<dbReference type="GeneCards" id="LASP1"/>
<dbReference type="HGNC" id="HGNC:6513">
    <property type="gene designation" value="LASP1"/>
</dbReference>
<dbReference type="HPA" id="ENSG00000002834">
    <property type="expression patterns" value="Low tissue specificity"/>
</dbReference>
<dbReference type="MIM" id="602920">
    <property type="type" value="gene"/>
</dbReference>
<dbReference type="neXtProt" id="NX_Q14847"/>
<dbReference type="OpenTargets" id="ENSG00000002834"/>
<dbReference type="PharmGKB" id="PA30298"/>
<dbReference type="VEuPathDB" id="HostDB:ENSG00000002834"/>
<dbReference type="eggNOG" id="KOG1702">
    <property type="taxonomic scope" value="Eukaryota"/>
</dbReference>
<dbReference type="GeneTree" id="ENSGT00940000154775"/>
<dbReference type="HOGENOM" id="CLU_026811_0_1_1"/>
<dbReference type="InParanoid" id="Q14847"/>
<dbReference type="OMA" id="TPVYHHQ"/>
<dbReference type="OrthoDB" id="191061at2759"/>
<dbReference type="PAN-GO" id="Q14847">
    <property type="GO annotations" value="2 GO annotations based on evolutionary models"/>
</dbReference>
<dbReference type="PhylomeDB" id="Q14847"/>
<dbReference type="TreeFam" id="TF319104"/>
<dbReference type="PathwayCommons" id="Q14847"/>
<dbReference type="SignaLink" id="Q14847"/>
<dbReference type="SIGNOR" id="Q14847"/>
<dbReference type="BioGRID-ORCS" id="3927">
    <property type="hits" value="16 hits in 1156 CRISPR screens"/>
</dbReference>
<dbReference type="CD-CODE" id="DEE660B4">
    <property type="entry name" value="Stress granule"/>
</dbReference>
<dbReference type="CD-CODE" id="FB4E32DD">
    <property type="entry name" value="Presynaptic clusters and postsynaptic densities"/>
</dbReference>
<dbReference type="ChiTaRS" id="LASP1">
    <property type="organism name" value="human"/>
</dbReference>
<dbReference type="EvolutionaryTrace" id="Q14847"/>
<dbReference type="GeneWiki" id="LASP1"/>
<dbReference type="GenomeRNAi" id="3927"/>
<dbReference type="Pharos" id="Q14847">
    <property type="development level" value="Tbio"/>
</dbReference>
<dbReference type="PRO" id="PR:Q14847"/>
<dbReference type="Proteomes" id="UP000005640">
    <property type="component" value="Chromosome 17"/>
</dbReference>
<dbReference type="RNAct" id="Q14847">
    <property type="molecule type" value="protein"/>
</dbReference>
<dbReference type="Bgee" id="ENSG00000002834">
    <property type="expression patterns" value="Expressed in lower lobe of lung and 208 other cell types or tissues"/>
</dbReference>
<dbReference type="ExpressionAtlas" id="Q14847">
    <property type="expression patterns" value="baseline and differential"/>
</dbReference>
<dbReference type="GO" id="GO:0030864">
    <property type="term" value="C:cortical actin cytoskeleton"/>
    <property type="evidence" value="ECO:0000250"/>
    <property type="project" value="UniProtKB"/>
</dbReference>
<dbReference type="GO" id="GO:0005737">
    <property type="term" value="C:cytoplasm"/>
    <property type="evidence" value="ECO:0000314"/>
    <property type="project" value="BHF-UCL"/>
</dbReference>
<dbReference type="GO" id="GO:0005925">
    <property type="term" value="C:focal adhesion"/>
    <property type="evidence" value="ECO:0007005"/>
    <property type="project" value="UniProtKB"/>
</dbReference>
<dbReference type="GO" id="GO:0098794">
    <property type="term" value="C:postsynapse"/>
    <property type="evidence" value="ECO:0007669"/>
    <property type="project" value="Ensembl"/>
</dbReference>
<dbReference type="GO" id="GO:0051015">
    <property type="term" value="F:actin filament binding"/>
    <property type="evidence" value="ECO:0000318"/>
    <property type="project" value="GO_Central"/>
</dbReference>
<dbReference type="GO" id="GO:0045296">
    <property type="term" value="F:cadherin binding"/>
    <property type="evidence" value="ECO:0007005"/>
    <property type="project" value="BHF-UCL"/>
</dbReference>
<dbReference type="GO" id="GO:0046872">
    <property type="term" value="F:metal ion binding"/>
    <property type="evidence" value="ECO:0007669"/>
    <property type="project" value="UniProtKB-KW"/>
</dbReference>
<dbReference type="GO" id="GO:0015075">
    <property type="term" value="F:monoatomic ion transmembrane transporter activity"/>
    <property type="evidence" value="ECO:0000250"/>
    <property type="project" value="UniProtKB"/>
</dbReference>
<dbReference type="GO" id="GO:0006811">
    <property type="term" value="P:monoatomic ion transport"/>
    <property type="evidence" value="ECO:0000250"/>
    <property type="project" value="UniProtKB"/>
</dbReference>
<dbReference type="CDD" id="cd09447">
    <property type="entry name" value="LIM_LASP"/>
    <property type="match status" value="1"/>
</dbReference>
<dbReference type="CDD" id="cd11934">
    <property type="entry name" value="SH3_Lasp1_C"/>
    <property type="match status" value="1"/>
</dbReference>
<dbReference type="FunFam" id="2.10.110.10:FF:000087">
    <property type="entry name" value="LIM zinc-binding domain-containing Nebulette"/>
    <property type="match status" value="1"/>
</dbReference>
<dbReference type="FunFam" id="2.30.30.40:FF:000007">
    <property type="entry name" value="nebulin isoform X1"/>
    <property type="match status" value="1"/>
</dbReference>
<dbReference type="Gene3D" id="2.10.110.10">
    <property type="entry name" value="Cysteine Rich Protein"/>
    <property type="match status" value="1"/>
</dbReference>
<dbReference type="Gene3D" id="2.30.30.40">
    <property type="entry name" value="SH3 Domains"/>
    <property type="match status" value="1"/>
</dbReference>
<dbReference type="InterPro" id="IPR035630">
    <property type="entry name" value="Lasp1_SH3"/>
</dbReference>
<dbReference type="InterPro" id="IPR051759">
    <property type="entry name" value="LIM-SH3_domain_protein"/>
</dbReference>
<dbReference type="InterPro" id="IPR000900">
    <property type="entry name" value="Nebulin_repeat"/>
</dbReference>
<dbReference type="InterPro" id="IPR036028">
    <property type="entry name" value="SH3-like_dom_sf"/>
</dbReference>
<dbReference type="InterPro" id="IPR001452">
    <property type="entry name" value="SH3_domain"/>
</dbReference>
<dbReference type="InterPro" id="IPR001781">
    <property type="entry name" value="Znf_LIM"/>
</dbReference>
<dbReference type="PANTHER" id="PTHR46218">
    <property type="entry name" value="LASP"/>
    <property type="match status" value="1"/>
</dbReference>
<dbReference type="PANTHER" id="PTHR46218:SF2">
    <property type="entry name" value="LIM AND SH3 DOMAIN PROTEIN 1"/>
    <property type="match status" value="1"/>
</dbReference>
<dbReference type="Pfam" id="PF00412">
    <property type="entry name" value="LIM"/>
    <property type="match status" value="1"/>
</dbReference>
<dbReference type="Pfam" id="PF00880">
    <property type="entry name" value="Nebulin"/>
    <property type="match status" value="2"/>
</dbReference>
<dbReference type="Pfam" id="PF14604">
    <property type="entry name" value="SH3_9"/>
    <property type="match status" value="1"/>
</dbReference>
<dbReference type="PRINTS" id="PR00452">
    <property type="entry name" value="SH3DOMAIN"/>
</dbReference>
<dbReference type="SMART" id="SM00132">
    <property type="entry name" value="LIM"/>
    <property type="match status" value="1"/>
</dbReference>
<dbReference type="SMART" id="SM00227">
    <property type="entry name" value="NEBU"/>
    <property type="match status" value="2"/>
</dbReference>
<dbReference type="SMART" id="SM00326">
    <property type="entry name" value="SH3"/>
    <property type="match status" value="1"/>
</dbReference>
<dbReference type="SUPFAM" id="SSF57716">
    <property type="entry name" value="Glucocorticoid receptor-like (DNA-binding domain)"/>
    <property type="match status" value="1"/>
</dbReference>
<dbReference type="SUPFAM" id="SSF50044">
    <property type="entry name" value="SH3-domain"/>
    <property type="match status" value="1"/>
</dbReference>
<dbReference type="PROSITE" id="PS00478">
    <property type="entry name" value="LIM_DOMAIN_1"/>
    <property type="match status" value="1"/>
</dbReference>
<dbReference type="PROSITE" id="PS50023">
    <property type="entry name" value="LIM_DOMAIN_2"/>
    <property type="match status" value="1"/>
</dbReference>
<dbReference type="PROSITE" id="PS51216">
    <property type="entry name" value="NEBULIN"/>
    <property type="match status" value="2"/>
</dbReference>
<dbReference type="PROSITE" id="PS50002">
    <property type="entry name" value="SH3"/>
    <property type="match status" value="1"/>
</dbReference>
<name>LASP1_HUMAN</name>
<protein>
    <recommendedName>
        <fullName>LIM and SH3 domain protein 1</fullName>
        <shortName>LASP-1</shortName>
    </recommendedName>
    <alternativeName>
        <fullName>Metastatic lymph node gene 50 protein</fullName>
        <shortName>MLN 50</shortName>
    </alternativeName>
</protein>
<proteinExistence type="evidence at protein level"/>
<organism>
    <name type="scientific">Homo sapiens</name>
    <name type="common">Human</name>
    <dbReference type="NCBI Taxonomy" id="9606"/>
    <lineage>
        <taxon>Eukaryota</taxon>
        <taxon>Metazoa</taxon>
        <taxon>Chordata</taxon>
        <taxon>Craniata</taxon>
        <taxon>Vertebrata</taxon>
        <taxon>Euteleostomi</taxon>
        <taxon>Mammalia</taxon>
        <taxon>Eutheria</taxon>
        <taxon>Euarchontoglires</taxon>
        <taxon>Primates</taxon>
        <taxon>Haplorrhini</taxon>
        <taxon>Catarrhini</taxon>
        <taxon>Hominidae</taxon>
        <taxon>Homo</taxon>
    </lineage>
</organism>
<comment type="function">
    <text evidence="1">Plays an important role in the regulation of dynamic actin-based, cytoskeletal activities. Agonist-dependent changes in LASP1 phosphorylation may also serve to regulate actin-associated ion transport activities, not only in the parietal cell but also in certain other F-actin-rich secretory epithelial cell types (By similarity).</text>
</comment>
<comment type="subunit">
    <text evidence="1 7">Interacts with F-actin (By similarity). Interacts with ANKRD54 (By similarity). Interacts with KBTBD10.</text>
</comment>
<comment type="interaction">
    <interactant intactId="EBI-742828">
        <id>Q14847</id>
    </interactant>
    <interactant intactId="EBI-740691">
        <id>O94989</id>
        <label>ARHGEF15</label>
    </interactant>
    <organismsDiffer>false</organismsDiffer>
    <experiments>3</experiments>
</comment>
<comment type="interaction">
    <interactant intactId="EBI-742828">
        <id>Q14847</id>
    </interactant>
    <interactant intactId="EBI-740459">
        <id>P51116</id>
        <label>FXR2</label>
    </interactant>
    <organismsDiffer>false</organismsDiffer>
    <experiments>3</experiments>
</comment>
<comment type="interaction">
    <interactant intactId="EBI-742828">
        <id>Q14847</id>
    </interactant>
    <interactant intactId="EBI-618309">
        <id>Q08379</id>
        <label>GOLGA2</label>
    </interactant>
    <organismsDiffer>false</organismsDiffer>
    <experiments>3</experiments>
</comment>
<comment type="interaction">
    <interactant intactId="EBI-742828">
        <id>Q14847</id>
    </interactant>
    <interactant intactId="EBI-10172511">
        <id>Q9BYR5</id>
        <label>KRTAP4-2</label>
    </interactant>
    <organismsDiffer>false</organismsDiffer>
    <experiments>3</experiments>
</comment>
<comment type="interaction">
    <interactant intactId="EBI-742828">
        <id>Q14847</id>
    </interactant>
    <interactant intactId="EBI-741037">
        <id>Q9BRK4</id>
        <label>LZTS2</label>
    </interactant>
    <organismsDiffer>false</organismsDiffer>
    <experiments>3</experiments>
</comment>
<comment type="interaction">
    <interactant intactId="EBI-742828">
        <id>Q14847</id>
    </interactant>
    <interactant intactId="EBI-724076">
        <id>Q99750</id>
        <label>MDFI</label>
    </interactant>
    <organismsDiffer>false</organismsDiffer>
    <experiments>3</experiments>
</comment>
<comment type="interaction">
    <interactant intactId="EBI-742828">
        <id>Q14847</id>
    </interactant>
    <interactant intactId="EBI-348380">
        <id>P25788</id>
        <label>PSMA3</label>
    </interactant>
    <organismsDiffer>false</organismsDiffer>
    <experiments>3</experiments>
</comment>
<comment type="interaction">
    <interactant intactId="EBI-742828">
        <id>Q14847</id>
    </interactant>
    <interactant intactId="EBI-307352">
        <id>Q04864</id>
        <label>REL</label>
    </interactant>
    <organismsDiffer>false</organismsDiffer>
    <experiments>3</experiments>
</comment>
<comment type="interaction">
    <interactant intactId="EBI-742828">
        <id>Q14847</id>
    </interactant>
    <interactant intactId="EBI-372094">
        <id>Q9BQY4</id>
        <label>RHOXF2</label>
    </interactant>
    <organismsDiffer>false</organismsDiffer>
    <experiments>3</experiments>
</comment>
<comment type="interaction">
    <interactant intactId="EBI-742828">
        <id>Q14847</id>
    </interactant>
    <interactant intactId="EBI-727037">
        <id>Q9UH03</id>
        <label>SEPTIN3</label>
    </interactant>
    <organismsDiffer>false</organismsDiffer>
    <experiments>3</experiments>
</comment>
<comment type="interaction">
    <interactant intactId="EBI-742828">
        <id>Q14847</id>
    </interactant>
    <interactant intactId="EBI-490630">
        <id>Q9NP31</id>
        <label>SH2D2A</label>
    </interactant>
    <organismsDiffer>false</organismsDiffer>
    <experiments>2</experiments>
</comment>
<comment type="interaction">
    <interactant intactId="EBI-742828">
        <id>Q14847</id>
    </interactant>
    <interactant intactId="EBI-742487">
        <id>O43597</id>
        <label>SPRY2</label>
    </interactant>
    <organismsDiffer>false</organismsDiffer>
    <experiments>3</experiments>
</comment>
<comment type="interaction">
    <interactant intactId="EBI-742828">
        <id>Q14847</id>
    </interactant>
    <interactant intactId="EBI-533224">
        <id>P15884</id>
        <label>TCF4</label>
    </interactant>
    <organismsDiffer>false</organismsDiffer>
    <experiments>3</experiments>
</comment>
<comment type="interaction">
    <interactant intactId="EBI-742828">
        <id>Q14847</id>
    </interactant>
    <interactant intactId="EBI-741515">
        <id>Q9NVV9</id>
        <label>THAP1</label>
    </interactant>
    <organismsDiffer>false</organismsDiffer>
    <experiments>3</experiments>
</comment>
<comment type="interaction">
    <interactant intactId="EBI-742828">
        <id>Q14847</id>
    </interactant>
    <interactant intactId="EBI-1042602">
        <id>Q9UDY2</id>
        <label>TJP2</label>
    </interactant>
    <organismsDiffer>false</organismsDiffer>
    <experiments>9</experiments>
</comment>
<comment type="interaction">
    <interactant intactId="EBI-742828">
        <id>Q14847</id>
    </interactant>
    <interactant intactId="EBI-719493">
        <id>P14373</id>
        <label>TRIM27</label>
    </interactant>
    <organismsDiffer>false</organismsDiffer>
    <experiments>3</experiments>
</comment>
<comment type="interaction">
    <interactant intactId="EBI-742828">
        <id>Q14847</id>
    </interactant>
    <interactant intactId="EBI-358993">
        <id>Q15645</id>
        <label>TRIP13</label>
    </interactant>
    <organismsDiffer>false</organismsDiffer>
    <experiments>7</experiments>
</comment>
<comment type="interaction">
    <interactant intactId="EBI-742828">
        <id>Q14847</id>
    </interactant>
    <interactant intactId="EBI-395708">
        <id>Q96C00</id>
        <label>ZBTB9</label>
    </interactant>
    <organismsDiffer>false</organismsDiffer>
    <experiments>4</experiments>
</comment>
<comment type="interaction">
    <interactant intactId="EBI-742828">
        <id>Q14847</id>
    </interactant>
    <interactant intactId="EBI-5458880">
        <id>Q96GY0</id>
        <label>ZC2HC1A</label>
    </interactant>
    <organismsDiffer>false</organismsDiffer>
    <experiments>3</experiments>
</comment>
<comment type="interaction">
    <interactant intactId="EBI-9088686">
        <id>Q14847-2</id>
    </interactant>
    <interactant intactId="EBI-11976299">
        <id>Q5BKX5-3</id>
        <label>ACTMAP</label>
    </interactant>
    <organismsDiffer>false</organismsDiffer>
    <experiments>3</experiments>
</comment>
<comment type="interaction">
    <interactant intactId="EBI-9088686">
        <id>Q14847-2</id>
    </interactant>
    <interactant intactId="EBI-11954519">
        <id>Q49AR9</id>
        <label>ANKS1A</label>
    </interactant>
    <organismsDiffer>false</organismsDiffer>
    <experiments>3</experiments>
</comment>
<comment type="interaction">
    <interactant intactId="EBI-9088686">
        <id>Q14847-2</id>
    </interactant>
    <interactant intactId="EBI-1057448">
        <id>Q5VV41</id>
        <label>ARHGEF16</label>
    </interactant>
    <organismsDiffer>false</organismsDiffer>
    <experiments>3</experiments>
</comment>
<comment type="interaction">
    <interactant intactId="EBI-9088686">
        <id>Q14847-2</id>
    </interactant>
    <interactant intactId="EBI-948603">
        <id>Q03989</id>
        <label>ARID5A</label>
    </interactant>
    <organismsDiffer>false</organismsDiffer>
    <experiments>3</experiments>
</comment>
<comment type="interaction">
    <interactant intactId="EBI-9088686">
        <id>Q14847-2</id>
    </interactant>
    <interactant intactId="EBI-11954292">
        <id>Q86V38</id>
        <label>ATN1</label>
    </interactant>
    <organismsDiffer>false</organismsDiffer>
    <experiments>3</experiments>
</comment>
<comment type="interaction">
    <interactant intactId="EBI-9088686">
        <id>Q14847-2</id>
    </interactant>
    <interactant intactId="EBI-930964">
        <id>P54253</id>
        <label>ATXN1</label>
    </interactant>
    <organismsDiffer>false</organismsDiffer>
    <experiments>9</experiments>
</comment>
<comment type="interaction">
    <interactant intactId="EBI-9088686">
        <id>Q14847-2</id>
    </interactant>
    <interactant intactId="EBI-11282723">
        <id>Q9Y5Z0</id>
        <label>BACE2</label>
    </interactant>
    <organismsDiffer>false</organismsDiffer>
    <experiments>3</experiments>
</comment>
<comment type="interaction">
    <interactant intactId="EBI-9088686">
        <id>Q14847-2</id>
    </interactant>
    <interactant intactId="EBI-2949658">
        <id>O95429</id>
        <label>BAG4</label>
    </interactant>
    <organismsDiffer>false</organismsDiffer>
    <experiments>3</experiments>
</comment>
<comment type="interaction">
    <interactant intactId="EBI-9088686">
        <id>Q14847-2</id>
    </interactant>
    <interactant intactId="EBI-742750">
        <id>Q8TBE0</id>
        <label>BAHD1</label>
    </interactant>
    <organismsDiffer>false</organismsDiffer>
    <experiments>3</experiments>
</comment>
<comment type="interaction">
    <interactant intactId="EBI-9088686">
        <id>Q14847-2</id>
    </interactant>
    <interactant intactId="EBI-711810">
        <id>O14503</id>
        <label>BHLHE40</label>
    </interactant>
    <organismsDiffer>false</organismsDiffer>
    <experiments>3</experiments>
</comment>
<comment type="interaction">
    <interactant intactId="EBI-9088686">
        <id>Q14847-2</id>
    </interactant>
    <interactant intactId="EBI-11983447">
        <id>Q8N9W6-4</id>
        <label>BOLL</label>
    </interactant>
    <organismsDiffer>false</organismsDiffer>
    <experiments>3</experiments>
</comment>
<comment type="interaction">
    <interactant intactId="EBI-9088686">
        <id>Q14847-2</id>
    </interactant>
    <interactant intactId="EBI-725606">
        <id>Q9NWQ9</id>
        <label>C14orf119</label>
    </interactant>
    <organismsDiffer>false</organismsDiffer>
    <experiments>3</experiments>
</comment>
<comment type="interaction">
    <interactant intactId="EBI-9088686">
        <id>Q14847-2</id>
    </interactant>
    <interactant intactId="EBI-1383687">
        <id>Q9UQM7</id>
        <label>CAMK2A</label>
    </interactant>
    <organismsDiffer>false</organismsDiffer>
    <experiments>3</experiments>
</comment>
<comment type="interaction">
    <interactant intactId="EBI-9088686">
        <id>Q14847-2</id>
    </interactant>
    <interactant intactId="EBI-744545">
        <id>Q8NEC5</id>
        <label>CATSPER1</label>
    </interactant>
    <organismsDiffer>false</organismsDiffer>
    <experiments>3</experiments>
</comment>
<comment type="interaction">
    <interactant intactId="EBI-9088686">
        <id>Q14847-2</id>
    </interactant>
    <interactant intactId="EBI-12261896">
        <id>Q5T4B2</id>
        <label>CERCAM</label>
    </interactant>
    <organismsDiffer>false</organismsDiffer>
    <experiments>3</experiments>
</comment>
<comment type="interaction">
    <interactant intactId="EBI-9088686">
        <id>Q14847-2</id>
    </interactant>
    <interactant intactId="EBI-25837549">
        <id>P28329-3</id>
        <label>CHAT</label>
    </interactant>
    <organismsDiffer>false</organismsDiffer>
    <experiments>3</experiments>
</comment>
<comment type="interaction">
    <interactant intactId="EBI-9088686">
        <id>Q14847-2</id>
    </interactant>
    <interactant intactId="EBI-2555370">
        <id>Q8IWX8</id>
        <label>CHERP</label>
    </interactant>
    <organismsDiffer>false</organismsDiffer>
    <experiments>3</experiments>
</comment>
<comment type="interaction">
    <interactant intactId="EBI-9088686">
        <id>Q14847-2</id>
    </interactant>
    <interactant intactId="EBI-6875961">
        <id>P02489</id>
        <label>CRYAA</label>
    </interactant>
    <organismsDiffer>false</organismsDiffer>
    <experiments>3</experiments>
</comment>
<comment type="interaction">
    <interactant intactId="EBI-9088686">
        <id>Q14847-2</id>
    </interactant>
    <interactant intactId="EBI-7043337">
        <id>P05813</id>
        <label>CRYBA1</label>
    </interactant>
    <organismsDiffer>false</organismsDiffer>
    <experiments>3</experiments>
</comment>
<comment type="interaction">
    <interactant intactId="EBI-9088686">
        <id>Q14847-2</id>
    </interactant>
    <interactant intactId="EBI-750444">
        <id>P53672</id>
        <label>CRYBA2</label>
    </interactant>
    <organismsDiffer>false</organismsDiffer>
    <experiments>4</experiments>
</comment>
<comment type="interaction">
    <interactant intactId="EBI-9088686">
        <id>Q14847-2</id>
    </interactant>
    <interactant intactId="EBI-747012">
        <id>Q9H0L4</id>
        <label>CSTF2T</label>
    </interactant>
    <organismsDiffer>false</organismsDiffer>
    <experiments>3</experiments>
</comment>
<comment type="interaction">
    <interactant intactId="EBI-9088686">
        <id>Q14847-2</id>
    </interactant>
    <interactant intactId="EBI-11962928">
        <id>Q9UI47-2</id>
        <label>CTNNA3</label>
    </interactant>
    <organismsDiffer>false</organismsDiffer>
    <experiments>3</experiments>
</comment>
<comment type="interaction">
    <interactant intactId="EBI-9088686">
        <id>Q14847-2</id>
    </interactant>
    <interactant intactId="EBI-3867333">
        <id>A8MQ03</id>
        <label>CYSRT1</label>
    </interactant>
    <organismsDiffer>false</organismsDiffer>
    <experiments>8</experiments>
</comment>
<comment type="interaction">
    <interactant intactId="EBI-9088686">
        <id>Q14847-2</id>
    </interactant>
    <interactant intactId="EBI-724310">
        <id>Q15038</id>
        <label>DAZAP2</label>
    </interactant>
    <organismsDiffer>false</organismsDiffer>
    <experiments>5</experiments>
</comment>
<comment type="interaction">
    <interactant intactId="EBI-9088686">
        <id>Q14847-2</id>
    </interactant>
    <interactant intactId="EBI-9679045">
        <id>Q9NQL9</id>
        <label>DMRT3</label>
    </interactant>
    <organismsDiffer>false</organismsDiffer>
    <experiments>3</experiments>
</comment>
<comment type="interaction">
    <interactant intactId="EBI-9088686">
        <id>Q14847-2</id>
    </interactant>
    <interactant intactId="EBI-2880244">
        <id>Q6PKX4</id>
        <label>DOK6</label>
    </interactant>
    <organismsDiffer>false</organismsDiffer>
    <experiments>3</experiments>
</comment>
<comment type="interaction">
    <interactant intactId="EBI-9088686">
        <id>Q14847-2</id>
    </interactant>
    <interactant intactId="EBI-740376">
        <id>Q86UW9</id>
        <label>DTX2</label>
    </interactant>
    <organismsDiffer>false</organismsDiffer>
    <experiments>3</experiments>
</comment>
<comment type="interaction">
    <interactant intactId="EBI-9088686">
        <id>Q14847-2</id>
    </interactant>
    <interactant intactId="EBI-17280301">
        <id>Q03828</id>
        <label>EVX2</label>
    </interactant>
    <organismsDiffer>false</organismsDiffer>
    <experiments>3</experiments>
</comment>
<comment type="interaction">
    <interactant intactId="EBI-9088686">
        <id>Q14847-2</id>
    </interactant>
    <interactant intactId="EBI-11978259">
        <id>Q92567-2</id>
        <label>FAM168A</label>
    </interactant>
    <organismsDiffer>false</organismsDiffer>
    <experiments>3</experiments>
</comment>
<comment type="interaction">
    <interactant intactId="EBI-9088686">
        <id>Q14847-2</id>
    </interactant>
    <interactant intactId="EBI-12193763">
        <id>A1KXE4-2</id>
        <label>FAM168B</label>
    </interactant>
    <organismsDiffer>false</organismsDiffer>
    <experiments>3</experiments>
</comment>
<comment type="interaction">
    <interactant intactId="EBI-9088686">
        <id>Q14847-2</id>
    </interactant>
    <interactant intactId="EBI-2510157">
        <id>Q96EF6</id>
        <label>FBXO17</label>
    </interactant>
    <organismsDiffer>false</organismsDiffer>
    <experiments>5</experiments>
</comment>
<comment type="interaction">
    <interactant intactId="EBI-9088686">
        <id>Q14847-2</id>
    </interactant>
    <interactant intactId="EBI-348399">
        <id>P22607</id>
        <label>FGFR3</label>
    </interactant>
    <organismsDiffer>false</organismsDiffer>
    <experiments>3</experiments>
</comment>
<comment type="interaction">
    <interactant intactId="EBI-9088686">
        <id>Q14847-2</id>
    </interactant>
    <interactant intactId="EBI-1759806">
        <id>O75593</id>
        <label>FOXH1</label>
    </interactant>
    <organismsDiffer>false</organismsDiffer>
    <experiments>3</experiments>
</comment>
<comment type="interaction">
    <interactant intactId="EBI-9088686">
        <id>Q14847-2</id>
    </interactant>
    <interactant intactId="EBI-1052570">
        <id>O95995</id>
        <label>GAS8</label>
    </interactant>
    <organismsDiffer>false</organismsDiffer>
    <experiments>3</experiments>
</comment>
<comment type="interaction">
    <interactant intactId="EBI-9088686">
        <id>Q14847-2</id>
    </interactant>
    <interactant intactId="EBI-10188645">
        <id>O75603</id>
        <label>GCM2</label>
    </interactant>
    <organismsDiffer>false</organismsDiffer>
    <experiments>3</experiments>
</comment>
<comment type="interaction">
    <interactant intactId="EBI-9088686">
        <id>Q14847-2</id>
    </interactant>
    <interactant intactId="EBI-744302">
        <id>P14136</id>
        <label>GFAP</label>
    </interactant>
    <organismsDiffer>false</organismsDiffer>
    <experiments>3</experiments>
</comment>
<comment type="interaction">
    <interactant intactId="EBI-9088686">
        <id>Q14847-2</id>
    </interactant>
    <interactant intactId="EBI-8285963">
        <id>Q14957</id>
        <label>GRIN2C</label>
    </interactant>
    <organismsDiffer>false</organismsDiffer>
    <experiments>3</experiments>
</comment>
<comment type="interaction">
    <interactant intactId="EBI-9088686">
        <id>Q14847-2</id>
    </interactant>
    <interactant intactId="EBI-747754">
        <id>P28799</id>
        <label>GRN</label>
    </interactant>
    <organismsDiffer>false</organismsDiffer>
    <experiments>3</experiments>
</comment>
<comment type="interaction">
    <interactant intactId="EBI-9088686">
        <id>Q14847-2</id>
    </interactant>
    <interactant intactId="EBI-351506">
        <id>P06396</id>
        <label>GSN</label>
    </interactant>
    <organismsDiffer>false</organismsDiffer>
    <experiments>3</experiments>
</comment>
<comment type="interaction">
    <interactant intactId="EBI-9088686">
        <id>Q14847-2</id>
    </interactant>
    <interactant intactId="EBI-11978177">
        <id>Q96NT3-2</id>
        <label>GUCD1</label>
    </interactant>
    <organismsDiffer>false</organismsDiffer>
    <experiments>3</experiments>
</comment>
<comment type="interaction">
    <interactant intactId="EBI-9088686">
        <id>Q14847-2</id>
    </interactant>
    <interactant intactId="EBI-740220">
        <id>O14964</id>
        <label>HGS</label>
    </interactant>
    <organismsDiffer>false</organismsDiffer>
    <experiments>3</experiments>
</comment>
<comment type="interaction">
    <interactant intactId="EBI-9088686">
        <id>Q14847-2</id>
    </interactant>
    <interactant intactId="EBI-352986">
        <id>P52597</id>
        <label>HNRNPF</label>
    </interactant>
    <organismsDiffer>false</organismsDiffer>
    <experiments>3</experiments>
</comment>
<comment type="interaction">
    <interactant intactId="EBI-9088686">
        <id>Q14847-2</id>
    </interactant>
    <interactant intactId="EBI-740785">
        <id>P49639</id>
        <label>HOXA1</label>
    </interactant>
    <organismsDiffer>false</organismsDiffer>
    <experiments>3</experiments>
</comment>
<comment type="interaction">
    <interactant intactId="EBI-9088686">
        <id>Q14847-2</id>
    </interactant>
    <interactant intactId="EBI-350145">
        <id>P01112</id>
        <label>HRAS</label>
    </interactant>
    <organismsDiffer>false</organismsDiffer>
    <experiments>3</experiments>
</comment>
<comment type="interaction">
    <interactant intactId="EBI-9088686">
        <id>Q14847-2</id>
    </interactant>
    <interactant intactId="EBI-352682">
        <id>P04792</id>
        <label>HSPB1</label>
    </interactant>
    <organismsDiffer>false</organismsDiffer>
    <experiments>3</experiments>
</comment>
<comment type="interaction">
    <interactant intactId="EBI-9088686">
        <id>Q14847-2</id>
    </interactant>
    <interactant intactId="EBI-352528">
        <id>P10809</id>
        <label>HSPD1</label>
    </interactant>
    <organismsDiffer>false</organismsDiffer>
    <experiments>3</experiments>
</comment>
<comment type="interaction">
    <interactant intactId="EBI-9088686">
        <id>Q14847-2</id>
    </interactant>
    <interactant intactId="EBI-748258">
        <id>Q5TA45</id>
        <label>INTS11</label>
    </interactant>
    <organismsDiffer>false</organismsDiffer>
    <experiments>3</experiments>
</comment>
<comment type="interaction">
    <interactant intactId="EBI-9088686">
        <id>Q14847-2</id>
    </interactant>
    <interactant intactId="EBI-10975473">
        <id>O60333-2</id>
        <label>KIF1B</label>
    </interactant>
    <organismsDiffer>false</organismsDiffer>
    <experiments>3</experiments>
</comment>
<comment type="interaction">
    <interactant intactId="EBI-9088686">
        <id>Q14847-2</id>
    </interactant>
    <interactant intactId="EBI-2432309">
        <id>Q92876</id>
        <label>KLK6</label>
    </interactant>
    <organismsDiffer>false</organismsDiffer>
    <experiments>3</experiments>
</comment>
<comment type="interaction">
    <interactant intactId="EBI-9088686">
        <id>Q14847-2</id>
    </interactant>
    <interactant intactId="EBI-10171774">
        <id>P60410</id>
        <label>KRTAP10-8</label>
    </interactant>
    <organismsDiffer>false</organismsDiffer>
    <experiments>3</experiments>
</comment>
<comment type="interaction">
    <interactant intactId="EBI-9088686">
        <id>Q14847-2</id>
    </interactant>
    <interactant intactId="EBI-10176396">
        <id>P60329</id>
        <label>KRTAP12-4</label>
    </interactant>
    <organismsDiffer>false</organismsDiffer>
    <experiments>3</experiments>
</comment>
<comment type="interaction">
    <interactant intactId="EBI-9088686">
        <id>Q14847-2</id>
    </interactant>
    <interactant intactId="EBI-12020132">
        <id>Q7Z4W3</id>
        <label>KRTAP19-3</label>
    </interactant>
    <organismsDiffer>false</organismsDiffer>
    <experiments>3</experiments>
</comment>
<comment type="interaction">
    <interactant intactId="EBI-9088686">
        <id>Q14847-2</id>
    </interactant>
    <interactant intactId="EBI-12958461">
        <id>Q3LI73</id>
        <label>KRTAP19-4</label>
    </interactant>
    <organismsDiffer>false</organismsDiffer>
    <experiments>3</experiments>
</comment>
<comment type="interaction">
    <interactant intactId="EBI-9088686">
        <id>Q14847-2</id>
    </interactant>
    <interactant intactId="EBI-12805508">
        <id>Q3LI70</id>
        <label>KRTAP19-6</label>
    </interactant>
    <organismsDiffer>false</organismsDiffer>
    <experiments>3</experiments>
</comment>
<comment type="interaction">
    <interactant intactId="EBI-9088686">
        <id>Q14847-2</id>
    </interactant>
    <interactant intactId="EBI-3957672">
        <id>Q6PEX3</id>
        <label>KRTAP26-1</label>
    </interactant>
    <organismsDiffer>false</organismsDiffer>
    <experiments>3</experiments>
</comment>
<comment type="interaction">
    <interactant intactId="EBI-9088686">
        <id>Q14847-2</id>
    </interactant>
    <interactant intactId="EBI-751260">
        <id>Q9BYR7</id>
        <label>KRTAP3-2</label>
    </interactant>
    <organismsDiffer>false</organismsDiffer>
    <experiments>3</experiments>
</comment>
<comment type="interaction">
    <interactant intactId="EBI-9088686">
        <id>Q14847-2</id>
    </interactant>
    <interactant intactId="EBI-3957694">
        <id>Q9BYR6</id>
        <label>KRTAP3-3</label>
    </interactant>
    <organismsDiffer>false</organismsDiffer>
    <experiments>3</experiments>
</comment>
<comment type="interaction">
    <interactant intactId="EBI-9088686">
        <id>Q14847-2</id>
    </interactant>
    <interactant intactId="EBI-11962084">
        <id>Q3LI66</id>
        <label>KRTAP6-2</label>
    </interactant>
    <organismsDiffer>false</organismsDiffer>
    <experiments>3</experiments>
</comment>
<comment type="interaction">
    <interactant intactId="EBI-9088686">
        <id>Q14847-2</id>
    </interactant>
    <interactant intactId="EBI-739546">
        <id>Q96PV6</id>
        <label>LENG8</label>
    </interactant>
    <organismsDiffer>false</organismsDiffer>
    <experiments>3</experiments>
</comment>
<comment type="interaction">
    <interactant intactId="EBI-9088686">
        <id>Q14847-2</id>
    </interactant>
    <interactant intactId="EBI-2798728">
        <id>P61968</id>
        <label>LMO4</label>
    </interactant>
    <organismsDiffer>false</organismsDiffer>
    <experiments>3</experiments>
</comment>
<comment type="interaction">
    <interactant intactId="EBI-9088686">
        <id>Q14847-2</id>
    </interactant>
    <interactant intactId="EBI-724076">
        <id>Q99750</id>
        <label>MDFI</label>
    </interactant>
    <organismsDiffer>false</organismsDiffer>
    <experiments>3</experiments>
</comment>
<comment type="interaction">
    <interactant intactId="EBI-9088686">
        <id>Q14847-2</id>
    </interactant>
    <interactant intactId="EBI-394558">
        <id>Q71SY5</id>
        <label>MED25</label>
    </interactant>
    <organismsDiffer>false</organismsDiffer>
    <experiments>3</experiments>
</comment>
<comment type="interaction">
    <interactant intactId="EBI-9088686">
        <id>Q14847-2</id>
    </interactant>
    <interactant intactId="EBI-2340269">
        <id>Q13064</id>
        <label>MKRN3</label>
    </interactant>
    <organismsDiffer>false</organismsDiffer>
    <experiments>3</experiments>
</comment>
<comment type="interaction">
    <interactant intactId="EBI-9088686">
        <id>Q14847-2</id>
    </interactant>
    <interactant intactId="EBI-475646">
        <id>P07196</id>
        <label>NEFL</label>
    </interactant>
    <organismsDiffer>false</organismsDiffer>
    <experiments>3</experiments>
</comment>
<comment type="interaction">
    <interactant intactId="EBI-9088686">
        <id>Q14847-2</id>
    </interactant>
    <interactant intactId="EBI-12025760">
        <id>Q86UR1-2</id>
        <label>NOXA1</label>
    </interactant>
    <organismsDiffer>false</organismsDiffer>
    <experiments>3</experiments>
</comment>
<comment type="interaction">
    <interactant intactId="EBI-9088686">
        <id>Q14847-2</id>
    </interactant>
    <interactant intactId="EBI-591778">
        <id>P61970</id>
        <label>NUTF2</label>
    </interactant>
    <organismsDiffer>false</organismsDiffer>
    <experiments>3</experiments>
</comment>
<comment type="interaction">
    <interactant intactId="EBI-9088686">
        <id>Q14847-2</id>
    </interactant>
    <interactant intactId="EBI-748974">
        <id>Q96CV9</id>
        <label>OPTN</label>
    </interactant>
    <organismsDiffer>false</organismsDiffer>
    <experiments>3</experiments>
</comment>
<comment type="interaction">
    <interactant intactId="EBI-9088686">
        <id>Q14847-2</id>
    </interactant>
    <interactant intactId="EBI-740446">
        <id>P32242</id>
        <label>OTX1</label>
    </interactant>
    <organismsDiffer>false</organismsDiffer>
    <experiments>3</experiments>
</comment>
<comment type="interaction">
    <interactant intactId="EBI-9088686">
        <id>Q14847-2</id>
    </interactant>
    <interactant intactId="EBI-12813389">
        <id>Q8TDS5</id>
        <label>OXER1</label>
    </interactant>
    <organismsDiffer>false</organismsDiffer>
    <experiments>3</experiments>
</comment>
<comment type="interaction">
    <interactant intactId="EBI-9088686">
        <id>Q14847-2</id>
    </interactant>
    <interactant intactId="EBI-1307">
        <id>Q13153</id>
        <label>PAK1</label>
    </interactant>
    <organismsDiffer>false</organismsDiffer>
    <experiments>3</experiments>
</comment>
<comment type="interaction">
    <interactant intactId="EBI-9088686">
        <id>Q14847-2</id>
    </interactant>
    <interactant intactId="EBI-716404">
        <id>P16284</id>
        <label>PECAM1</label>
    </interactant>
    <organismsDiffer>false</organismsDiffer>
    <experiments>3</experiments>
</comment>
<comment type="interaction">
    <interactant intactId="EBI-9088686">
        <id>Q14847-2</id>
    </interactant>
    <interactant intactId="EBI-748265">
        <id>P78337</id>
        <label>PITX1</label>
    </interactant>
    <organismsDiffer>false</organismsDiffer>
    <experiments>5</experiments>
</comment>
<comment type="interaction">
    <interactant intactId="EBI-9088686">
        <id>Q14847-2</id>
    </interactant>
    <interactant intactId="EBI-716569">
        <id>P28340</id>
        <label>POLD1</label>
    </interactant>
    <organismsDiffer>false</organismsDiffer>
    <experiments>3</experiments>
</comment>
<comment type="interaction">
    <interactant intactId="EBI-9088686">
        <id>Q14847-2</id>
    </interactant>
    <interactant intactId="EBI-8673859">
        <id>P28069</id>
        <label>POU1F1</label>
    </interactant>
    <organismsDiffer>false</organismsDiffer>
    <experiments>5</experiments>
</comment>
<comment type="interaction">
    <interactant intactId="EBI-9088686">
        <id>Q14847-2</id>
    </interactant>
    <interactant intactId="EBI-12754095">
        <id>P86480</id>
        <label>PRR20D</label>
    </interactant>
    <organismsDiffer>false</organismsDiffer>
    <experiments>3</experiments>
</comment>
<comment type="interaction">
    <interactant intactId="EBI-9088686">
        <id>Q14847-2</id>
    </interactant>
    <interactant intactId="EBI-11986293">
        <id>P0CG20</id>
        <label>PRR35</label>
    </interactant>
    <organismsDiffer>false</organismsDiffer>
    <experiments>3</experiments>
</comment>
<comment type="interaction">
    <interactant intactId="EBI-9088686">
        <id>Q14847-2</id>
    </interactant>
    <interactant intactId="EBI-2798044">
        <id>Q2TAL8</id>
        <label>QRICH1</label>
    </interactant>
    <organismsDiffer>false</organismsDiffer>
    <experiments>3</experiments>
</comment>
<comment type="interaction">
    <interactant intactId="EBI-9088686">
        <id>Q14847-2</id>
    </interactant>
    <interactant intactId="EBI-12123390">
        <id>Q9NWB1-5</id>
        <label>RBFOX1</label>
    </interactant>
    <organismsDiffer>false</organismsDiffer>
    <experiments>3</experiments>
</comment>
<comment type="interaction">
    <interactant intactId="EBI-9088686">
        <id>Q14847-2</id>
    </interactant>
    <interactant intactId="EBI-740343">
        <id>Q93062-3</id>
        <label>RBPMS</label>
    </interactant>
    <organismsDiffer>false</organismsDiffer>
    <experiments>8</experiments>
</comment>
<comment type="interaction">
    <interactant intactId="EBI-9088686">
        <id>Q14847-2</id>
    </interactant>
    <interactant intactId="EBI-11987469">
        <id>Q6ZRY4</id>
        <label>RBPMS2</label>
    </interactant>
    <organismsDiffer>false</organismsDiffer>
    <experiments>3</experiments>
</comment>
<comment type="interaction">
    <interactant intactId="EBI-9088686">
        <id>Q14847-2</id>
    </interactant>
    <interactant intactId="EBI-372094">
        <id>Q9BQY4</id>
        <label>RHOXF2</label>
    </interactant>
    <organismsDiffer>false</organismsDiffer>
    <experiments>3</experiments>
</comment>
<comment type="interaction">
    <interactant intactId="EBI-9088686">
        <id>Q14847-2</id>
    </interactant>
    <interactant intactId="EBI-396669">
        <id>Q9Y3C5</id>
        <label>RNF11</label>
    </interactant>
    <organismsDiffer>false</organismsDiffer>
    <experiments>3</experiments>
</comment>
<comment type="interaction">
    <interactant intactId="EBI-9088686">
        <id>Q14847-2</id>
    </interactant>
    <interactant intactId="EBI-2341200">
        <id>Q9H0F5</id>
        <label>RNF38</label>
    </interactant>
    <organismsDiffer>false</organismsDiffer>
    <experiments>3</experiments>
</comment>
<comment type="interaction">
    <interactant intactId="EBI-9088686">
        <id>Q14847-2</id>
    </interactant>
    <interactant intactId="EBI-12000762">
        <id>Q7Z5V6-2</id>
        <label>SAXO4</label>
    </interactant>
    <organismsDiffer>false</organismsDiffer>
    <experiments>3</experiments>
</comment>
<comment type="interaction">
    <interactant intactId="EBI-9088686">
        <id>Q14847-2</id>
    </interactant>
    <interactant intactId="EBI-11959123">
        <id>Q99932-2</id>
        <label>SPAG8</label>
    </interactant>
    <organismsDiffer>false</organismsDiffer>
    <experiments>3</experiments>
</comment>
<comment type="interaction">
    <interactant intactId="EBI-9088686">
        <id>Q14847-2</id>
    </interactant>
    <interactant intactId="EBI-8644516">
        <id>Q9BXF9</id>
        <label>TEKT3</label>
    </interactant>
    <organismsDiffer>false</organismsDiffer>
    <experiments>3</experiments>
</comment>
<comment type="interaction">
    <interactant intactId="EBI-9088686">
        <id>Q14847-2</id>
    </interactant>
    <interactant intactId="EBI-750487">
        <id>Q8WW24</id>
        <label>TEKT4</label>
    </interactant>
    <organismsDiffer>false</organismsDiffer>
    <experiments>3</experiments>
</comment>
<comment type="interaction">
    <interactant intactId="EBI-9088686">
        <id>Q14847-2</id>
    </interactant>
    <interactant intactId="EBI-10239812">
        <id>Q96M29</id>
        <label>TEKT5</label>
    </interactant>
    <organismsDiffer>false</organismsDiffer>
    <experiments>3</experiments>
</comment>
<comment type="interaction">
    <interactant intactId="EBI-9088686">
        <id>Q14847-2</id>
    </interactant>
    <interactant intactId="EBI-357061">
        <id>Q92734</id>
        <label>TFG</label>
    </interactant>
    <organismsDiffer>false</organismsDiffer>
    <experiments>3</experiments>
</comment>
<comment type="interaction">
    <interactant intactId="EBI-9088686">
        <id>Q14847-2</id>
    </interactant>
    <interactant intactId="EBI-3939165">
        <id>O43711</id>
        <label>TLX3</label>
    </interactant>
    <organismsDiffer>false</organismsDiffer>
    <experiments>5</experiments>
</comment>
<comment type="interaction">
    <interactant intactId="EBI-9088686">
        <id>Q14847-2</id>
    </interactant>
    <interactant intactId="EBI-949753">
        <id>Q63HR2</id>
        <label>TNS2</label>
    </interactant>
    <organismsDiffer>false</organismsDiffer>
    <experiments>3</experiments>
</comment>
<comment type="interaction">
    <interactant intactId="EBI-9088686">
        <id>Q14847-2</id>
    </interactant>
    <interactant intactId="EBI-358993">
        <id>Q15645</id>
        <label>TRIP13</label>
    </interactant>
    <organismsDiffer>false</organismsDiffer>
    <experiments>3</experiments>
</comment>
<comment type="interaction">
    <interactant intactId="EBI-9088686">
        <id>Q14847-2</id>
    </interactant>
    <interactant intactId="EBI-947187">
        <id>Q9UHD9</id>
        <label>UBQLN2</label>
    </interactant>
    <organismsDiffer>false</organismsDiffer>
    <experiments>3</experiments>
</comment>
<comment type="interaction">
    <interactant intactId="EBI-9088686">
        <id>Q14847-2</id>
    </interactant>
    <interactant intactId="EBI-12068150">
        <id>Q6NVU6</id>
        <label>UFSP1</label>
    </interactant>
    <organismsDiffer>false</organismsDiffer>
    <experiments>3</experiments>
</comment>
<comment type="interaction">
    <interactant intactId="EBI-9088686">
        <id>Q14847-2</id>
    </interactant>
    <interactant intactId="EBI-2107455">
        <id>Q08AM6</id>
        <label>VAC14</label>
    </interactant>
    <organismsDiffer>false</organismsDiffer>
    <experiments>3</experiments>
</comment>
<comment type="interaction">
    <interactant intactId="EBI-9088686">
        <id>Q14847-2</id>
    </interactant>
    <interactant intactId="EBI-11980193">
        <id>Q14119</id>
        <label>VEZF1</label>
    </interactant>
    <organismsDiffer>false</organismsDiffer>
    <experiments>3</experiments>
</comment>
<comment type="interaction">
    <interactant intactId="EBI-9088686">
        <id>Q14847-2</id>
    </interactant>
    <interactant intactId="EBI-11957216">
        <id>A8MV65-2</id>
        <label>VGLL3</label>
    </interactant>
    <organismsDiffer>false</organismsDiffer>
    <experiments>3</experiments>
</comment>
<comment type="interaction">
    <interactant intactId="EBI-9088686">
        <id>Q14847-2</id>
    </interactant>
    <interactant intactId="EBI-353844">
        <id>P08670</id>
        <label>VIM</label>
    </interactant>
    <organismsDiffer>false</organismsDiffer>
    <experiments>3</experiments>
</comment>
<comment type="interaction">
    <interactant intactId="EBI-9088686">
        <id>Q14847-2</id>
    </interactant>
    <interactant intactId="EBI-2559305">
        <id>A5D8V6</id>
        <label>VPS37C</label>
    </interactant>
    <organismsDiffer>false</organismsDiffer>
    <experiments>3</experiments>
</comment>
<comment type="interaction">
    <interactant intactId="EBI-9088686">
        <id>Q14847-2</id>
    </interactant>
    <interactant intactId="EBI-720609">
        <id>O76024</id>
        <label>WFS1</label>
    </interactant>
    <organismsDiffer>false</organismsDiffer>
    <experiments>3</experiments>
</comment>
<comment type="interaction">
    <interactant intactId="EBI-9088686">
        <id>Q14847-2</id>
    </interactant>
    <interactant intactId="EBI-12040603">
        <id>Q9NZC7-5</id>
        <label>WWOX</label>
    </interactant>
    <organismsDiffer>false</organismsDiffer>
    <experiments>3</experiments>
</comment>
<comment type="interaction">
    <interactant intactId="EBI-9088686">
        <id>Q14847-2</id>
    </interactant>
    <interactant intactId="EBI-515331">
        <id>P07947</id>
        <label>YES1</label>
    </interactant>
    <organismsDiffer>false</organismsDiffer>
    <experiments>3</experiments>
</comment>
<comment type="interaction">
    <interactant intactId="EBI-9088686">
        <id>Q14847-2</id>
    </interactant>
    <interactant intactId="EBI-1051237">
        <id>Q9BYJ9</id>
        <label>YTHDF1</label>
    </interactant>
    <organismsDiffer>false</organismsDiffer>
    <experiments>3</experiments>
</comment>
<comment type="interaction">
    <interactant intactId="EBI-9088686">
        <id>Q14847-2</id>
    </interactant>
    <interactant intactId="EBI-742550">
        <id>Q96K80</id>
        <label>ZC3H10</label>
    </interactant>
    <organismsDiffer>false</organismsDiffer>
    <experiments>3</experiments>
</comment>
<comment type="interaction">
    <interactant intactId="EBI-9088686">
        <id>Q14847-2</id>
    </interactant>
    <interactant intactId="EBI-524753">
        <id>Q8IUH5</id>
        <label>ZDHHC17</label>
    </interactant>
    <organismsDiffer>false</organismsDiffer>
    <experiments>3</experiments>
</comment>
<comment type="subcellular location">
    <subcellularLocation>
        <location evidence="1">Cytoplasm</location>
        <location evidence="1">Cell cortex</location>
    </subcellularLocation>
    <subcellularLocation>
        <location evidence="1">Cytoplasm</location>
        <location evidence="1">Cytoskeleton</location>
    </subcellularLocation>
    <text evidence="1">Associated with the F-actin rich cortical cytoskeleton.</text>
</comment>
<comment type="alternative products">
    <event type="alternative splicing"/>
    <isoform>
        <id>Q14847-1</id>
        <name>1</name>
        <sequence type="displayed"/>
    </isoform>
    <isoform>
        <id>Q14847-2</id>
        <name>2</name>
        <sequence type="described" ref="VSP_016554"/>
    </isoform>
    <isoform>
        <id>Q14847-3</id>
        <name>3</name>
        <sequence type="described" ref="VSP_054611"/>
    </isoform>
</comment>
<comment type="online information" name="Atlas of Genetics and Cytogenetics in Oncology and Haematology">
    <link uri="https://atlasgeneticsoncology.org/gene/203/Lasp1"/>
</comment>
<gene>
    <name type="primary">LASP1</name>
    <name type="synonym">MLN50</name>
</gene>
<evidence type="ECO:0000250" key="1"/>
<evidence type="ECO:0000250" key="2">
    <source>
        <dbReference type="UniProtKB" id="Q61792"/>
    </source>
</evidence>
<evidence type="ECO:0000255" key="3">
    <source>
        <dbReference type="PROSITE-ProRule" id="PRU00125"/>
    </source>
</evidence>
<evidence type="ECO:0000255" key="4">
    <source>
        <dbReference type="PROSITE-ProRule" id="PRU00192"/>
    </source>
</evidence>
<evidence type="ECO:0000256" key="5">
    <source>
        <dbReference type="SAM" id="MobiDB-lite"/>
    </source>
</evidence>
<evidence type="ECO:0000269" key="6">
    <source>
    </source>
</evidence>
<evidence type="ECO:0000269" key="7">
    <source>
    </source>
</evidence>
<evidence type="ECO:0000303" key="8">
    <source>
    </source>
</evidence>
<evidence type="ECO:0000303" key="9">
    <source>
    </source>
</evidence>
<evidence type="ECO:0000305" key="10"/>
<evidence type="ECO:0007744" key="11">
    <source>
    </source>
</evidence>
<evidence type="ECO:0007744" key="12">
    <source>
    </source>
</evidence>
<evidence type="ECO:0007744" key="13">
    <source>
    </source>
</evidence>
<evidence type="ECO:0007744" key="14">
    <source>
    </source>
</evidence>
<evidence type="ECO:0007744" key="15">
    <source>
    </source>
</evidence>
<evidence type="ECO:0007744" key="16">
    <source>
    </source>
</evidence>
<evidence type="ECO:0007744" key="17">
    <source>
    </source>
</evidence>
<evidence type="ECO:0007744" key="18">
    <source>
    </source>
</evidence>
<evidence type="ECO:0007744" key="19">
    <source>
    </source>
</evidence>
<evidence type="ECO:0007829" key="20">
    <source>
        <dbReference type="PDB" id="3I35"/>
    </source>
</evidence>
<feature type="chain" id="PRO_0000075761" description="LIM and SH3 domain protein 1">
    <location>
        <begin position="1"/>
        <end position="261"/>
    </location>
</feature>
<feature type="domain" description="LIM zinc-binding" evidence="3">
    <location>
        <begin position="5"/>
        <end position="56"/>
    </location>
</feature>
<feature type="repeat" description="Nebulin 1">
    <location>
        <begin position="61"/>
        <end position="95"/>
    </location>
</feature>
<feature type="repeat" description="Nebulin 2">
    <location>
        <begin position="97"/>
        <end position="131"/>
    </location>
</feature>
<feature type="domain" description="SH3" evidence="4">
    <location>
        <begin position="202"/>
        <end position="261"/>
    </location>
</feature>
<feature type="region of interest" description="Disordered" evidence="5">
    <location>
        <begin position="111"/>
        <end position="186"/>
    </location>
</feature>
<feature type="compositionally biased region" description="Basic and acidic residues" evidence="5">
    <location>
        <begin position="121"/>
        <end position="130"/>
    </location>
</feature>
<feature type="compositionally biased region" description="Low complexity" evidence="5">
    <location>
        <begin position="167"/>
        <end position="183"/>
    </location>
</feature>
<feature type="modified residue" description="N-acetylmethionine" evidence="6">
    <location>
        <position position="1"/>
    </location>
</feature>
<feature type="modified residue" description="N6-acetyllysine" evidence="14">
    <location>
        <position position="42"/>
    </location>
</feature>
<feature type="modified residue" description="Phosphothreonine" evidence="13 15 16 17">
    <location>
        <position position="68"/>
    </location>
</feature>
<feature type="modified residue" description="N6-methyllysine" evidence="18">
    <location>
        <position position="75"/>
    </location>
</feature>
<feature type="modified residue" description="Phosphoserine" evidence="17">
    <location>
        <position position="99"/>
    </location>
</feature>
<feature type="modified residue" description="Phosphothreonine" evidence="11 13 15 16 17">
    <location>
        <position position="104"/>
    </location>
</feature>
<feature type="modified residue" description="N6-succinyllysine" evidence="2">
    <location>
        <position position="112"/>
    </location>
</feature>
<feature type="modified residue" description="Phosphoserine" evidence="16">
    <location>
        <position position="118"/>
    </location>
</feature>
<feature type="modified residue" description="Phosphoserine" evidence="17">
    <location>
        <position position="134"/>
    </location>
</feature>
<feature type="modified residue" description="Phosphoserine" evidence="12 13 16 17 19">
    <location>
        <position position="146"/>
    </location>
</feature>
<feature type="splice variant" id="VSP_054611" description="In isoform 3." evidence="8">
    <original>MNPNCARCGKIVYPTEKVNCLDKFWHKACFHCETCKMTLNMKNYKGYEKKPYCNAHYPKQSFTMVADTPENLRLKQQSELQSQ</original>
    <variation>MLPLRDLQDDTEHEELQGLREEALLQR</variation>
    <location>
        <begin position="1"/>
        <end position="83"/>
    </location>
</feature>
<feature type="splice variant" id="VSP_016554" description="In isoform 2." evidence="9">
    <original>GGGGKRYRAVYDYSAADEDEVSFQDGDTIVNVQQIDDGWMYGTVERTGDTGMLPANYVEAI</original>
    <variation>ICLQHIPRHRIRPGRDPSILQCLCFLKPATACDSYPSSSFFCQLKPSSATSAGSLLWQASPLIDFLVFSLDGTGMGLSGGGRGPWGRAGMGDLLACGPHLPLCSLPSHPPAQLLTYPHIPGLG</variation>
    <location>
        <begin position="201"/>
        <end position="261"/>
    </location>
</feature>
<feature type="sequence conflict" description="In Ref. 4; AAH12460." evidence="10" ref="4">
    <original>E</original>
    <variation>R</variation>
    <location>
        <position position="79"/>
    </location>
</feature>
<feature type="sequence conflict" description="In Ref. 4; AAH12460." evidence="10" ref="4">
    <original>V</original>
    <variation>A</variation>
    <location>
        <position position="210"/>
    </location>
</feature>
<feature type="sequence conflict" description="In Ref. 4; AAH12460." evidence="10" ref="4">
    <original>E</original>
    <variation>A</variation>
    <location>
        <position position="220"/>
    </location>
</feature>
<feature type="strand" evidence="20">
    <location>
        <begin position="207"/>
        <end position="211"/>
    </location>
</feature>
<feature type="strand" evidence="20">
    <location>
        <begin position="228"/>
        <end position="236"/>
    </location>
</feature>
<feature type="strand" evidence="20">
    <location>
        <begin position="239"/>
        <end position="244"/>
    </location>
</feature>
<feature type="turn" evidence="20">
    <location>
        <begin position="245"/>
        <end position="248"/>
    </location>
</feature>
<feature type="strand" evidence="20">
    <location>
        <begin position="249"/>
        <end position="254"/>
    </location>
</feature>
<feature type="helix" evidence="20">
    <location>
        <begin position="255"/>
        <end position="257"/>
    </location>
</feature>
<feature type="strand" evidence="20">
    <location>
        <begin position="258"/>
        <end position="260"/>
    </location>
</feature>
<accession>Q14847</accession>
<accession>B4DGQ0</accession>
<accession>Q96ED2</accession>
<accession>Q96IG0</accession>
<reference key="1">
    <citation type="journal article" date="1995" name="Genomics">
        <title>Identification of four novel human genes amplified and overexpressed in breast carcinoma and localized to the q11-q21.3 region of chromosome 17.</title>
        <authorList>
            <person name="Tomasetto C.L."/>
            <person name="Regnier C.H."/>
            <person name="Moog-Lutz C."/>
            <person name="Mattei M.-G."/>
            <person name="Chenard M.-P."/>
            <person name="Lidereau R."/>
            <person name="Basset P."/>
            <person name="Rio M.-C."/>
        </authorList>
    </citation>
    <scope>NUCLEOTIDE SEQUENCE [MRNA] (ISOFORM 1)</scope>
    <source>
        <tissue>Mammary carcinoma</tissue>
    </source>
</reference>
<reference key="2">
    <citation type="journal article" date="2004" name="Nat. Genet.">
        <title>Complete sequencing and characterization of 21,243 full-length human cDNAs.</title>
        <authorList>
            <person name="Ota T."/>
            <person name="Suzuki Y."/>
            <person name="Nishikawa T."/>
            <person name="Otsuki T."/>
            <person name="Sugiyama T."/>
            <person name="Irie R."/>
            <person name="Wakamatsu A."/>
            <person name="Hayashi K."/>
            <person name="Sato H."/>
            <person name="Nagai K."/>
            <person name="Kimura K."/>
            <person name="Makita H."/>
            <person name="Sekine M."/>
            <person name="Obayashi M."/>
            <person name="Nishi T."/>
            <person name="Shibahara T."/>
            <person name="Tanaka T."/>
            <person name="Ishii S."/>
            <person name="Yamamoto J."/>
            <person name="Saito K."/>
            <person name="Kawai Y."/>
            <person name="Isono Y."/>
            <person name="Nakamura Y."/>
            <person name="Nagahari K."/>
            <person name="Murakami K."/>
            <person name="Yasuda T."/>
            <person name="Iwayanagi T."/>
            <person name="Wagatsuma M."/>
            <person name="Shiratori A."/>
            <person name="Sudo H."/>
            <person name="Hosoiri T."/>
            <person name="Kaku Y."/>
            <person name="Kodaira H."/>
            <person name="Kondo H."/>
            <person name="Sugawara M."/>
            <person name="Takahashi M."/>
            <person name="Kanda K."/>
            <person name="Yokoi T."/>
            <person name="Furuya T."/>
            <person name="Kikkawa E."/>
            <person name="Omura Y."/>
            <person name="Abe K."/>
            <person name="Kamihara K."/>
            <person name="Katsuta N."/>
            <person name="Sato K."/>
            <person name="Tanikawa M."/>
            <person name="Yamazaki M."/>
            <person name="Ninomiya K."/>
            <person name="Ishibashi T."/>
            <person name="Yamashita H."/>
            <person name="Murakawa K."/>
            <person name="Fujimori K."/>
            <person name="Tanai H."/>
            <person name="Kimata M."/>
            <person name="Watanabe M."/>
            <person name="Hiraoka S."/>
            <person name="Chiba Y."/>
            <person name="Ishida S."/>
            <person name="Ono Y."/>
            <person name="Takiguchi S."/>
            <person name="Watanabe S."/>
            <person name="Yosida M."/>
            <person name="Hotuta T."/>
            <person name="Kusano J."/>
            <person name="Kanehori K."/>
            <person name="Takahashi-Fujii A."/>
            <person name="Hara H."/>
            <person name="Tanase T.-O."/>
            <person name="Nomura Y."/>
            <person name="Togiya S."/>
            <person name="Komai F."/>
            <person name="Hara R."/>
            <person name="Takeuchi K."/>
            <person name="Arita M."/>
            <person name="Imose N."/>
            <person name="Musashino K."/>
            <person name="Yuuki H."/>
            <person name="Oshima A."/>
            <person name="Sasaki N."/>
            <person name="Aotsuka S."/>
            <person name="Yoshikawa Y."/>
            <person name="Matsunawa H."/>
            <person name="Ichihara T."/>
            <person name="Shiohata N."/>
            <person name="Sano S."/>
            <person name="Moriya S."/>
            <person name="Momiyama H."/>
            <person name="Satoh N."/>
            <person name="Takami S."/>
            <person name="Terashima Y."/>
            <person name="Suzuki O."/>
            <person name="Nakagawa S."/>
            <person name="Senoh A."/>
            <person name="Mizoguchi H."/>
            <person name="Goto Y."/>
            <person name="Shimizu F."/>
            <person name="Wakebe H."/>
            <person name="Hishigaki H."/>
            <person name="Watanabe T."/>
            <person name="Sugiyama A."/>
            <person name="Takemoto M."/>
            <person name="Kawakami B."/>
            <person name="Yamazaki M."/>
            <person name="Watanabe K."/>
            <person name="Kumagai A."/>
            <person name="Itakura S."/>
            <person name="Fukuzumi Y."/>
            <person name="Fujimori Y."/>
            <person name="Komiyama M."/>
            <person name="Tashiro H."/>
            <person name="Tanigami A."/>
            <person name="Fujiwara T."/>
            <person name="Ono T."/>
            <person name="Yamada K."/>
            <person name="Fujii Y."/>
            <person name="Ozaki K."/>
            <person name="Hirao M."/>
            <person name="Ohmori Y."/>
            <person name="Kawabata A."/>
            <person name="Hikiji T."/>
            <person name="Kobatake N."/>
            <person name="Inagaki H."/>
            <person name="Ikema Y."/>
            <person name="Okamoto S."/>
            <person name="Okitani R."/>
            <person name="Kawakami T."/>
            <person name="Noguchi S."/>
            <person name="Itoh T."/>
            <person name="Shigeta K."/>
            <person name="Senba T."/>
            <person name="Matsumura K."/>
            <person name="Nakajima Y."/>
            <person name="Mizuno T."/>
            <person name="Morinaga M."/>
            <person name="Sasaki M."/>
            <person name="Togashi T."/>
            <person name="Oyama M."/>
            <person name="Hata H."/>
            <person name="Watanabe M."/>
            <person name="Komatsu T."/>
            <person name="Mizushima-Sugano J."/>
            <person name="Satoh T."/>
            <person name="Shirai Y."/>
            <person name="Takahashi Y."/>
            <person name="Nakagawa K."/>
            <person name="Okumura K."/>
            <person name="Nagase T."/>
            <person name="Nomura N."/>
            <person name="Kikuchi H."/>
            <person name="Masuho Y."/>
            <person name="Yamashita R."/>
            <person name="Nakai K."/>
            <person name="Yada T."/>
            <person name="Nakamura Y."/>
            <person name="Ohara O."/>
            <person name="Isogai T."/>
            <person name="Sugano S."/>
        </authorList>
    </citation>
    <scope>NUCLEOTIDE SEQUENCE [LARGE SCALE MRNA] (ISOFORM 3)</scope>
    <source>
        <tissue>Brain</tissue>
    </source>
</reference>
<reference key="3">
    <citation type="journal article" date="2006" name="Nature">
        <title>DNA sequence of human chromosome 17 and analysis of rearrangement in the human lineage.</title>
        <authorList>
            <person name="Zody M.C."/>
            <person name="Garber M."/>
            <person name="Adams D.J."/>
            <person name="Sharpe T."/>
            <person name="Harrow J."/>
            <person name="Lupski J.R."/>
            <person name="Nicholson C."/>
            <person name="Searle S.M."/>
            <person name="Wilming L."/>
            <person name="Young S.K."/>
            <person name="Abouelleil A."/>
            <person name="Allen N.R."/>
            <person name="Bi W."/>
            <person name="Bloom T."/>
            <person name="Borowsky M.L."/>
            <person name="Bugalter B.E."/>
            <person name="Butler J."/>
            <person name="Chang J.L."/>
            <person name="Chen C.-K."/>
            <person name="Cook A."/>
            <person name="Corum B."/>
            <person name="Cuomo C.A."/>
            <person name="de Jong P.J."/>
            <person name="DeCaprio D."/>
            <person name="Dewar K."/>
            <person name="FitzGerald M."/>
            <person name="Gilbert J."/>
            <person name="Gibson R."/>
            <person name="Gnerre S."/>
            <person name="Goldstein S."/>
            <person name="Grafham D.V."/>
            <person name="Grocock R."/>
            <person name="Hafez N."/>
            <person name="Hagopian D.S."/>
            <person name="Hart E."/>
            <person name="Norman C.H."/>
            <person name="Humphray S."/>
            <person name="Jaffe D.B."/>
            <person name="Jones M."/>
            <person name="Kamal M."/>
            <person name="Khodiyar V.K."/>
            <person name="LaButti K."/>
            <person name="Laird G."/>
            <person name="Lehoczky J."/>
            <person name="Liu X."/>
            <person name="Lokyitsang T."/>
            <person name="Loveland J."/>
            <person name="Lui A."/>
            <person name="Macdonald P."/>
            <person name="Major J.E."/>
            <person name="Matthews L."/>
            <person name="Mauceli E."/>
            <person name="McCarroll S.A."/>
            <person name="Mihalev A.H."/>
            <person name="Mudge J."/>
            <person name="Nguyen C."/>
            <person name="Nicol R."/>
            <person name="O'Leary S.B."/>
            <person name="Osoegawa K."/>
            <person name="Schwartz D.C."/>
            <person name="Shaw-Smith C."/>
            <person name="Stankiewicz P."/>
            <person name="Steward C."/>
            <person name="Swarbreck D."/>
            <person name="Venkataraman V."/>
            <person name="Whittaker C.A."/>
            <person name="Yang X."/>
            <person name="Zimmer A.R."/>
            <person name="Bradley A."/>
            <person name="Hubbard T."/>
            <person name="Birren B.W."/>
            <person name="Rogers J."/>
            <person name="Lander E.S."/>
            <person name="Nusbaum C."/>
        </authorList>
    </citation>
    <scope>NUCLEOTIDE SEQUENCE [LARGE SCALE GENOMIC DNA]</scope>
</reference>
<reference key="4">
    <citation type="journal article" date="2004" name="Genome Res.">
        <title>The status, quality, and expansion of the NIH full-length cDNA project: the Mammalian Gene Collection (MGC).</title>
        <authorList>
            <consortium name="The MGC Project Team"/>
        </authorList>
    </citation>
    <scope>NUCLEOTIDE SEQUENCE [LARGE SCALE MRNA] (ISOFORMS 1 AND 2)</scope>
    <source>
        <tissue>Liver</tissue>
        <tissue>Skin</tissue>
    </source>
</reference>
<reference key="5">
    <citation type="journal article" date="2003" name="Nat. Biotechnol.">
        <title>Exploring proteomes and analyzing protein processing by mass spectrometric identification of sorted N-terminal peptides.</title>
        <authorList>
            <person name="Gevaert K."/>
            <person name="Goethals M."/>
            <person name="Martens L."/>
            <person name="Van Damme J."/>
            <person name="Staes A."/>
            <person name="Thomas G.R."/>
            <person name="Vandekerckhove J."/>
        </authorList>
    </citation>
    <scope>PROTEIN SEQUENCE OF 1-7</scope>
    <scope>ACETYLATION AT MET-1</scope>
    <source>
        <tissue>Platelet</tissue>
    </source>
</reference>
<reference key="6">
    <citation type="journal article" date="1995" name="FEBS Lett.">
        <title>Lasp-1 (MLN 50) defines a new LIM protein subfamily characterized by the association of LIM and SH3 domains.</title>
        <authorList>
            <person name="Tomasetto C."/>
            <person name="Moog-Lutz C."/>
            <person name="Regnier C.H."/>
            <person name="Schreiber V."/>
            <person name="Basset P."/>
            <person name="Rio M.-C."/>
        </authorList>
    </citation>
    <scope>DOMAINS</scope>
</reference>
<reference key="7">
    <citation type="journal article" date="2007" name="J. Proteome Res.">
        <title>Improved titanium dioxide enrichment of phosphopeptides from HeLa cells and high confident phosphopeptide identification by cross-validation of MS/MS and MS/MS/MS spectra.</title>
        <authorList>
            <person name="Yu L.R."/>
            <person name="Zhu Z."/>
            <person name="Chan K.C."/>
            <person name="Issaq H.J."/>
            <person name="Dimitrov D.S."/>
            <person name="Veenstra T.D."/>
        </authorList>
    </citation>
    <scope>PHOSPHORYLATION [LARGE SCALE ANALYSIS] AT THR-104</scope>
    <scope>IDENTIFICATION BY MASS SPECTROMETRY [LARGE SCALE ANALYSIS]</scope>
    <source>
        <tissue>Cervix carcinoma</tissue>
    </source>
</reference>
<reference key="8">
    <citation type="journal article" date="2008" name="J. Proteome Res.">
        <title>Phosphoproteome of resting human platelets.</title>
        <authorList>
            <person name="Zahedi R.P."/>
            <person name="Lewandrowski U."/>
            <person name="Wiesner J."/>
            <person name="Wortelkamp S."/>
            <person name="Moebius J."/>
            <person name="Schuetz C."/>
            <person name="Walter U."/>
            <person name="Gambaryan S."/>
            <person name="Sickmann A."/>
        </authorList>
    </citation>
    <scope>PHOSPHORYLATION [LARGE SCALE ANALYSIS] AT SER-146</scope>
    <scope>IDENTIFICATION BY MASS SPECTROMETRY [LARGE SCALE ANALYSIS]</scope>
    <source>
        <tissue>Platelet</tissue>
    </source>
</reference>
<reference key="9">
    <citation type="journal article" date="2008" name="Proc. Natl. Acad. Sci. U.S.A.">
        <title>A quantitative atlas of mitotic phosphorylation.</title>
        <authorList>
            <person name="Dephoure N."/>
            <person name="Zhou C."/>
            <person name="Villen J."/>
            <person name="Beausoleil S.A."/>
            <person name="Bakalarski C.E."/>
            <person name="Elledge S.J."/>
            <person name="Gygi S.P."/>
        </authorList>
    </citation>
    <scope>PHOSPHORYLATION [LARGE SCALE ANALYSIS] AT THR-68; THR-104 AND SER-146</scope>
    <scope>IDENTIFICATION BY MASS SPECTROMETRY [LARGE SCALE ANALYSIS]</scope>
    <source>
        <tissue>Cervix carcinoma</tissue>
    </source>
</reference>
<reference key="10">
    <citation type="journal article" date="2009" name="J. Biol. Chem.">
        <title>Novel beta-propeller of the BTB-Kelch protein Krp1 provides a binding site for Lasp-1 that is necessary for pseudopodial extension.</title>
        <authorList>
            <person name="Gray C.H."/>
            <person name="McGarry L.C."/>
            <person name="Spence H.J."/>
            <person name="Riboldi-Tunnicliffe A."/>
            <person name="Ozanne B.W."/>
        </authorList>
    </citation>
    <scope>INTERACTION WITH KBTBD10</scope>
</reference>
<reference key="11">
    <citation type="journal article" date="2009" name="Sci. Signal.">
        <title>Quantitative phosphoproteomic analysis of T cell receptor signaling reveals system-wide modulation of protein-protein interactions.</title>
        <authorList>
            <person name="Mayya V."/>
            <person name="Lundgren D.H."/>
            <person name="Hwang S.-I."/>
            <person name="Rezaul K."/>
            <person name="Wu L."/>
            <person name="Eng J.K."/>
            <person name="Rodionov V."/>
            <person name="Han D.K."/>
        </authorList>
    </citation>
    <scope>PHOSPHORYLATION [LARGE SCALE ANALYSIS] AT THR-68 AND THR-104</scope>
    <scope>IDENTIFICATION BY MASS SPECTROMETRY [LARGE SCALE ANALYSIS]</scope>
    <source>
        <tissue>Leukemic T-cell</tissue>
    </source>
</reference>
<reference key="12">
    <citation type="journal article" date="2009" name="Science">
        <title>Lysine acetylation targets protein complexes and co-regulates major cellular functions.</title>
        <authorList>
            <person name="Choudhary C."/>
            <person name="Kumar C."/>
            <person name="Gnad F."/>
            <person name="Nielsen M.L."/>
            <person name="Rehman M."/>
            <person name="Walther T.C."/>
            <person name="Olsen J.V."/>
            <person name="Mann M."/>
        </authorList>
    </citation>
    <scope>ACETYLATION [LARGE SCALE ANALYSIS] AT LYS-42</scope>
    <scope>IDENTIFICATION BY MASS SPECTROMETRY [LARGE SCALE ANALYSIS]</scope>
</reference>
<reference key="13">
    <citation type="journal article" date="2010" name="Sci. Signal.">
        <title>Quantitative phosphoproteomics reveals widespread full phosphorylation site occupancy during mitosis.</title>
        <authorList>
            <person name="Olsen J.V."/>
            <person name="Vermeulen M."/>
            <person name="Santamaria A."/>
            <person name="Kumar C."/>
            <person name="Miller M.L."/>
            <person name="Jensen L.J."/>
            <person name="Gnad F."/>
            <person name="Cox J."/>
            <person name="Jensen T.S."/>
            <person name="Nigg E.A."/>
            <person name="Brunak S."/>
            <person name="Mann M."/>
        </authorList>
    </citation>
    <scope>PHOSPHORYLATION [LARGE SCALE ANALYSIS] AT THR-68; THR-104; SER-118 AND SER-146</scope>
    <scope>IDENTIFICATION BY MASS SPECTROMETRY [LARGE SCALE ANALYSIS]</scope>
    <source>
        <tissue>Cervix carcinoma</tissue>
    </source>
</reference>
<reference key="14">
    <citation type="journal article" date="2011" name="BMC Syst. Biol.">
        <title>Initial characterization of the human central proteome.</title>
        <authorList>
            <person name="Burkard T.R."/>
            <person name="Planyavsky M."/>
            <person name="Kaupe I."/>
            <person name="Breitwieser F.P."/>
            <person name="Buerckstuemmer T."/>
            <person name="Bennett K.L."/>
            <person name="Superti-Furga G."/>
            <person name="Colinge J."/>
        </authorList>
    </citation>
    <scope>IDENTIFICATION BY MASS SPECTROMETRY [LARGE SCALE ANALYSIS]</scope>
</reference>
<reference key="15">
    <citation type="journal article" date="2013" name="J. Proteome Res.">
        <title>Toward a comprehensive characterization of a human cancer cell phosphoproteome.</title>
        <authorList>
            <person name="Zhou H."/>
            <person name="Di Palma S."/>
            <person name="Preisinger C."/>
            <person name="Peng M."/>
            <person name="Polat A.N."/>
            <person name="Heck A.J."/>
            <person name="Mohammed S."/>
        </authorList>
    </citation>
    <scope>PHOSPHORYLATION [LARGE SCALE ANALYSIS] AT THR-68; SER-99; THR-104; SER-134 AND SER-146</scope>
    <scope>IDENTIFICATION BY MASS SPECTROMETRY [LARGE SCALE ANALYSIS]</scope>
    <source>
        <tissue>Cervix carcinoma</tissue>
        <tissue>Erythroleukemia</tissue>
    </source>
</reference>
<reference key="16">
    <citation type="journal article" date="2014" name="J. Proteomics">
        <title>An enzyme assisted RP-RPLC approach for in-depth analysis of human liver phosphoproteome.</title>
        <authorList>
            <person name="Bian Y."/>
            <person name="Song C."/>
            <person name="Cheng K."/>
            <person name="Dong M."/>
            <person name="Wang F."/>
            <person name="Huang J."/>
            <person name="Sun D."/>
            <person name="Wang L."/>
            <person name="Ye M."/>
            <person name="Zou H."/>
        </authorList>
    </citation>
    <scope>PHOSPHORYLATION [LARGE SCALE ANALYSIS] AT SER-146</scope>
    <scope>IDENTIFICATION BY MASS SPECTROMETRY [LARGE SCALE ANALYSIS]</scope>
    <source>
        <tissue>Liver</tissue>
    </source>
</reference>
<reference key="17">
    <citation type="journal article" date="2014" name="Mol. Cell. Proteomics">
        <title>Immunoaffinity enrichment and mass spectrometry analysis of protein methylation.</title>
        <authorList>
            <person name="Guo A."/>
            <person name="Gu H."/>
            <person name="Zhou J."/>
            <person name="Mulhern D."/>
            <person name="Wang Y."/>
            <person name="Lee K.A."/>
            <person name="Yang V."/>
            <person name="Aguiar M."/>
            <person name="Kornhauser J."/>
            <person name="Jia X."/>
            <person name="Ren J."/>
            <person name="Beausoleil S.A."/>
            <person name="Silva J.C."/>
            <person name="Vemulapalli V."/>
            <person name="Bedford M.T."/>
            <person name="Comb M.J."/>
        </authorList>
    </citation>
    <scope>METHYLATION [LARGE SCALE ANALYSIS] AT LYS-75</scope>
    <scope>IDENTIFICATION BY MASS SPECTROMETRY [LARGE SCALE ANALYSIS]</scope>
    <source>
        <tissue>Colon carcinoma</tissue>
    </source>
</reference>
<reference key="18">
    <citation type="journal article" date="2015" name="Proteomics">
        <title>N-terminome analysis of the human mitochondrial proteome.</title>
        <authorList>
            <person name="Vaca Jacome A.S."/>
            <person name="Rabilloud T."/>
            <person name="Schaeffer-Reiss C."/>
            <person name="Rompais M."/>
            <person name="Ayoub D."/>
            <person name="Lane L."/>
            <person name="Bairoch A."/>
            <person name="Van Dorsselaer A."/>
            <person name="Carapito C."/>
        </authorList>
    </citation>
    <scope>IDENTIFICATION BY MASS SPECTROMETRY [LARGE SCALE ANALYSIS]</scope>
</reference>